<evidence type="ECO:0000255" key="1">
    <source>
        <dbReference type="HAMAP-Rule" id="MF_00412"/>
    </source>
</evidence>
<gene>
    <name evidence="1" type="primary">proA</name>
    <name type="ordered locus">Bcep1808_0625</name>
</gene>
<name>PROA_BURVG</name>
<organism>
    <name type="scientific">Burkholderia vietnamiensis (strain G4 / LMG 22486)</name>
    <name type="common">Burkholderia cepacia (strain R1808)</name>
    <dbReference type="NCBI Taxonomy" id="269482"/>
    <lineage>
        <taxon>Bacteria</taxon>
        <taxon>Pseudomonadati</taxon>
        <taxon>Pseudomonadota</taxon>
        <taxon>Betaproteobacteria</taxon>
        <taxon>Burkholderiales</taxon>
        <taxon>Burkholderiaceae</taxon>
        <taxon>Burkholderia</taxon>
        <taxon>Burkholderia cepacia complex</taxon>
    </lineage>
</organism>
<keyword id="KW-0028">Amino-acid biosynthesis</keyword>
<keyword id="KW-0963">Cytoplasm</keyword>
<keyword id="KW-0521">NADP</keyword>
<keyword id="KW-0560">Oxidoreductase</keyword>
<keyword id="KW-0641">Proline biosynthesis</keyword>
<protein>
    <recommendedName>
        <fullName evidence="1">Gamma-glutamyl phosphate reductase</fullName>
        <shortName evidence="1">GPR</shortName>
        <ecNumber evidence="1">1.2.1.41</ecNumber>
    </recommendedName>
    <alternativeName>
        <fullName evidence="1">Glutamate-5-semialdehyde dehydrogenase</fullName>
    </alternativeName>
    <alternativeName>
        <fullName evidence="1">Glutamyl-gamma-semialdehyde dehydrogenase</fullName>
        <shortName evidence="1">GSA dehydrogenase</shortName>
    </alternativeName>
</protein>
<sequence length="423" mass="45062">MDIDQYMTDLGRRARHASRAMARASTAAKNAALDAVARAIERDASALKEANARDVARARDKGLDAAFIDRLTLSDKALKTMVEGLRQVASLADPIGEISNLKYRPSGIQVGQMRVPLGVIGIIYESRPNVTIDAAALCLKSGNATILRGGSEALESNAALAKLIGEGLEAAGLPQDAVQVVATADRAAVGKLITMTEYVDVIVPRGGKSLIERLINEARVPMIKHLDGICHVYVDDRADLAKALTVCDNAKTHRYGTCNTMETLLVSSGIAAALLPPLGKLYRDKQVELRVDAAARAVLADAGVGPLVDATDADWHTEYLAPVLAIKVVDGLDAAIEHINHYGSHHTDAIVTEDHDRAMRFLREVDSASVMVNASTRFADGFEFGLGAEIGISNDKLHARGPVGLEGLTSLKYVVLGHGEGRQ</sequence>
<dbReference type="EC" id="1.2.1.41" evidence="1"/>
<dbReference type="EMBL" id="CP000614">
    <property type="protein sequence ID" value="ABO53637.1"/>
    <property type="molecule type" value="Genomic_DNA"/>
</dbReference>
<dbReference type="SMR" id="A4JBI4"/>
<dbReference type="KEGG" id="bvi:Bcep1808_0625"/>
<dbReference type="eggNOG" id="COG0014">
    <property type="taxonomic scope" value="Bacteria"/>
</dbReference>
<dbReference type="HOGENOM" id="CLU_030231_0_0_4"/>
<dbReference type="UniPathway" id="UPA00098">
    <property type="reaction ID" value="UER00360"/>
</dbReference>
<dbReference type="Proteomes" id="UP000002287">
    <property type="component" value="Chromosome 1"/>
</dbReference>
<dbReference type="GO" id="GO:0005737">
    <property type="term" value="C:cytoplasm"/>
    <property type="evidence" value="ECO:0007669"/>
    <property type="project" value="UniProtKB-SubCell"/>
</dbReference>
<dbReference type="GO" id="GO:0004350">
    <property type="term" value="F:glutamate-5-semialdehyde dehydrogenase activity"/>
    <property type="evidence" value="ECO:0007669"/>
    <property type="project" value="UniProtKB-UniRule"/>
</dbReference>
<dbReference type="GO" id="GO:0050661">
    <property type="term" value="F:NADP binding"/>
    <property type="evidence" value="ECO:0007669"/>
    <property type="project" value="InterPro"/>
</dbReference>
<dbReference type="GO" id="GO:0055129">
    <property type="term" value="P:L-proline biosynthetic process"/>
    <property type="evidence" value="ECO:0007669"/>
    <property type="project" value="UniProtKB-UniRule"/>
</dbReference>
<dbReference type="CDD" id="cd07079">
    <property type="entry name" value="ALDH_F18-19_ProA-GPR"/>
    <property type="match status" value="1"/>
</dbReference>
<dbReference type="FunFam" id="3.40.309.10:FF:000006">
    <property type="entry name" value="Gamma-glutamyl phosphate reductase"/>
    <property type="match status" value="1"/>
</dbReference>
<dbReference type="Gene3D" id="3.40.605.10">
    <property type="entry name" value="Aldehyde Dehydrogenase, Chain A, domain 1"/>
    <property type="match status" value="1"/>
</dbReference>
<dbReference type="Gene3D" id="3.40.309.10">
    <property type="entry name" value="Aldehyde Dehydrogenase, Chain A, domain 2"/>
    <property type="match status" value="1"/>
</dbReference>
<dbReference type="HAMAP" id="MF_00412">
    <property type="entry name" value="ProA"/>
    <property type="match status" value="1"/>
</dbReference>
<dbReference type="InterPro" id="IPR016161">
    <property type="entry name" value="Ald_DH/histidinol_DH"/>
</dbReference>
<dbReference type="InterPro" id="IPR016163">
    <property type="entry name" value="Ald_DH_C"/>
</dbReference>
<dbReference type="InterPro" id="IPR016162">
    <property type="entry name" value="Ald_DH_N"/>
</dbReference>
<dbReference type="InterPro" id="IPR015590">
    <property type="entry name" value="Aldehyde_DH_dom"/>
</dbReference>
<dbReference type="InterPro" id="IPR020593">
    <property type="entry name" value="G-glutamylP_reductase_CS"/>
</dbReference>
<dbReference type="InterPro" id="IPR012134">
    <property type="entry name" value="Glu-5-SA_DH"/>
</dbReference>
<dbReference type="InterPro" id="IPR000965">
    <property type="entry name" value="GPR_dom"/>
</dbReference>
<dbReference type="NCBIfam" id="NF001221">
    <property type="entry name" value="PRK00197.1"/>
    <property type="match status" value="1"/>
</dbReference>
<dbReference type="NCBIfam" id="TIGR00407">
    <property type="entry name" value="proA"/>
    <property type="match status" value="1"/>
</dbReference>
<dbReference type="PANTHER" id="PTHR11063:SF8">
    <property type="entry name" value="DELTA-1-PYRROLINE-5-CARBOXYLATE SYNTHASE"/>
    <property type="match status" value="1"/>
</dbReference>
<dbReference type="PANTHER" id="PTHR11063">
    <property type="entry name" value="GLUTAMATE SEMIALDEHYDE DEHYDROGENASE"/>
    <property type="match status" value="1"/>
</dbReference>
<dbReference type="Pfam" id="PF00171">
    <property type="entry name" value="Aldedh"/>
    <property type="match status" value="1"/>
</dbReference>
<dbReference type="PIRSF" id="PIRSF000151">
    <property type="entry name" value="GPR"/>
    <property type="match status" value="1"/>
</dbReference>
<dbReference type="SUPFAM" id="SSF53720">
    <property type="entry name" value="ALDH-like"/>
    <property type="match status" value="1"/>
</dbReference>
<dbReference type="PROSITE" id="PS01223">
    <property type="entry name" value="PROA"/>
    <property type="match status" value="1"/>
</dbReference>
<proteinExistence type="inferred from homology"/>
<comment type="function">
    <text evidence="1">Catalyzes the NADPH-dependent reduction of L-glutamate 5-phosphate into L-glutamate 5-semialdehyde and phosphate. The product spontaneously undergoes cyclization to form 1-pyrroline-5-carboxylate.</text>
</comment>
<comment type="catalytic activity">
    <reaction evidence="1">
        <text>L-glutamate 5-semialdehyde + phosphate + NADP(+) = L-glutamyl 5-phosphate + NADPH + H(+)</text>
        <dbReference type="Rhea" id="RHEA:19541"/>
        <dbReference type="ChEBI" id="CHEBI:15378"/>
        <dbReference type="ChEBI" id="CHEBI:43474"/>
        <dbReference type="ChEBI" id="CHEBI:57783"/>
        <dbReference type="ChEBI" id="CHEBI:58066"/>
        <dbReference type="ChEBI" id="CHEBI:58274"/>
        <dbReference type="ChEBI" id="CHEBI:58349"/>
        <dbReference type="EC" id="1.2.1.41"/>
    </reaction>
</comment>
<comment type="pathway">
    <text evidence="1">Amino-acid biosynthesis; L-proline biosynthesis; L-glutamate 5-semialdehyde from L-glutamate: step 2/2.</text>
</comment>
<comment type="subcellular location">
    <subcellularLocation>
        <location evidence="1">Cytoplasm</location>
    </subcellularLocation>
</comment>
<comment type="similarity">
    <text evidence="1">Belongs to the gamma-glutamyl phosphate reductase family.</text>
</comment>
<feature type="chain" id="PRO_1000049940" description="Gamma-glutamyl phosphate reductase">
    <location>
        <begin position="1"/>
        <end position="423"/>
    </location>
</feature>
<accession>A4JBI4</accession>
<reference key="1">
    <citation type="submission" date="2007-03" db="EMBL/GenBank/DDBJ databases">
        <title>Complete sequence of chromosome 1 of Burkholderia vietnamiensis G4.</title>
        <authorList>
            <consortium name="US DOE Joint Genome Institute"/>
            <person name="Copeland A."/>
            <person name="Lucas S."/>
            <person name="Lapidus A."/>
            <person name="Barry K."/>
            <person name="Detter J.C."/>
            <person name="Glavina del Rio T."/>
            <person name="Hammon N."/>
            <person name="Israni S."/>
            <person name="Dalin E."/>
            <person name="Tice H."/>
            <person name="Pitluck S."/>
            <person name="Chain P."/>
            <person name="Malfatti S."/>
            <person name="Shin M."/>
            <person name="Vergez L."/>
            <person name="Schmutz J."/>
            <person name="Larimer F."/>
            <person name="Land M."/>
            <person name="Hauser L."/>
            <person name="Kyrpides N."/>
            <person name="Tiedje J."/>
            <person name="Richardson P."/>
        </authorList>
    </citation>
    <scope>NUCLEOTIDE SEQUENCE [LARGE SCALE GENOMIC DNA]</scope>
    <source>
        <strain>G4 / LMG 22486</strain>
    </source>
</reference>